<accession>Q12115</accession>
<comment type="miscellaneous">
    <text evidence="1">Partially overlaps CDC7.</text>
</comment>
<comment type="caution">
    <text evidence="2">Product of a dubious gene prediction unlikely to encode a functional protein. Because of that it is not part of the S.cerevisiae S288c complete/reference proteome set.</text>
</comment>
<reference key="1">
    <citation type="journal article" date="1997" name="Nature">
        <title>The nucleotide sequence of Saccharomyces cerevisiae chromosome IV.</title>
        <authorList>
            <person name="Jacq C."/>
            <person name="Alt-Moerbe J."/>
            <person name="Andre B."/>
            <person name="Arnold W."/>
            <person name="Bahr A."/>
            <person name="Ballesta J.P.G."/>
            <person name="Bargues M."/>
            <person name="Baron L."/>
            <person name="Becker A."/>
            <person name="Biteau N."/>
            <person name="Bloecker H."/>
            <person name="Blugeon C."/>
            <person name="Boskovic J."/>
            <person name="Brandt P."/>
            <person name="Brueckner M."/>
            <person name="Buitrago M.J."/>
            <person name="Coster F."/>
            <person name="Delaveau T."/>
            <person name="del Rey F."/>
            <person name="Dujon B."/>
            <person name="Eide L.G."/>
            <person name="Garcia-Cantalejo J.M."/>
            <person name="Goffeau A."/>
            <person name="Gomez-Peris A."/>
            <person name="Granotier C."/>
            <person name="Hanemann V."/>
            <person name="Hankeln T."/>
            <person name="Hoheisel J.D."/>
            <person name="Jaeger W."/>
            <person name="Jimenez A."/>
            <person name="Jonniaux J.-L."/>
            <person name="Kraemer C."/>
            <person name="Kuester H."/>
            <person name="Laamanen P."/>
            <person name="Legros Y."/>
            <person name="Louis E.J."/>
            <person name="Moeller-Rieker S."/>
            <person name="Monnet A."/>
            <person name="Moro M."/>
            <person name="Mueller-Auer S."/>
            <person name="Nussbaumer B."/>
            <person name="Paricio N."/>
            <person name="Paulin L."/>
            <person name="Perea J."/>
            <person name="Perez-Alonso M."/>
            <person name="Perez-Ortin J.E."/>
            <person name="Pohl T.M."/>
            <person name="Prydz H."/>
            <person name="Purnelle B."/>
            <person name="Rasmussen S.W."/>
            <person name="Remacha M.A."/>
            <person name="Revuelta J.L."/>
            <person name="Rieger M."/>
            <person name="Salom D."/>
            <person name="Saluz H.P."/>
            <person name="Saiz J.E."/>
            <person name="Saren A.-M."/>
            <person name="Schaefer M."/>
            <person name="Scharfe M."/>
            <person name="Schmidt E.R."/>
            <person name="Schneider C."/>
            <person name="Scholler P."/>
            <person name="Schwarz S."/>
            <person name="Soler-Mira A."/>
            <person name="Urrestarazu L.A."/>
            <person name="Verhasselt P."/>
            <person name="Vissers S."/>
            <person name="Voet M."/>
            <person name="Volckaert G."/>
            <person name="Wagner G."/>
            <person name="Wambutt R."/>
            <person name="Wedler E."/>
            <person name="Wedler H."/>
            <person name="Woelfl S."/>
            <person name="Harris D.E."/>
            <person name="Bowman S."/>
            <person name="Brown D."/>
            <person name="Churcher C.M."/>
            <person name="Connor R."/>
            <person name="Dedman K."/>
            <person name="Gentles S."/>
            <person name="Hamlin N."/>
            <person name="Hunt S."/>
            <person name="Jones L."/>
            <person name="McDonald S."/>
            <person name="Murphy L.D."/>
            <person name="Niblett D."/>
            <person name="Odell C."/>
            <person name="Oliver K."/>
            <person name="Rajandream M.A."/>
            <person name="Richards C."/>
            <person name="Shore L."/>
            <person name="Walsh S.V."/>
            <person name="Barrell B.G."/>
            <person name="Dietrich F.S."/>
            <person name="Mulligan J.T."/>
            <person name="Allen E."/>
            <person name="Araujo R."/>
            <person name="Aviles E."/>
            <person name="Berno A."/>
            <person name="Carpenter J."/>
            <person name="Chen E."/>
            <person name="Cherry J.M."/>
            <person name="Chung E."/>
            <person name="Duncan M."/>
            <person name="Hunicke-Smith S."/>
            <person name="Hyman R.W."/>
            <person name="Komp C."/>
            <person name="Lashkari D."/>
            <person name="Lew H."/>
            <person name="Lin D."/>
            <person name="Mosedale D."/>
            <person name="Nakahara K."/>
            <person name="Namath A."/>
            <person name="Oefner P."/>
            <person name="Oh C."/>
            <person name="Petel F.X."/>
            <person name="Roberts D."/>
            <person name="Schramm S."/>
            <person name="Schroeder M."/>
            <person name="Shogren T."/>
            <person name="Shroff N."/>
            <person name="Winant A."/>
            <person name="Yelton M.A."/>
            <person name="Botstein D."/>
            <person name="Davis R.W."/>
            <person name="Johnston M."/>
            <person name="Andrews S."/>
            <person name="Brinkman R."/>
            <person name="Cooper J."/>
            <person name="Ding H."/>
            <person name="Du Z."/>
            <person name="Favello A."/>
            <person name="Fulton L."/>
            <person name="Gattung S."/>
            <person name="Greco T."/>
            <person name="Hallsworth K."/>
            <person name="Hawkins J."/>
            <person name="Hillier L.W."/>
            <person name="Jier M."/>
            <person name="Johnson D."/>
            <person name="Johnston L."/>
            <person name="Kirsten J."/>
            <person name="Kucaba T."/>
            <person name="Langston Y."/>
            <person name="Latreille P."/>
            <person name="Le T."/>
            <person name="Mardis E."/>
            <person name="Menezes S."/>
            <person name="Miller N."/>
            <person name="Nhan M."/>
            <person name="Pauley A."/>
            <person name="Peluso D."/>
            <person name="Rifkin L."/>
            <person name="Riles L."/>
            <person name="Taich A."/>
            <person name="Trevaskis E."/>
            <person name="Vignati D."/>
            <person name="Wilcox L."/>
            <person name="Wohldman P."/>
            <person name="Vaudin M."/>
            <person name="Wilson R."/>
            <person name="Waterston R."/>
            <person name="Albermann K."/>
            <person name="Hani J."/>
            <person name="Heumann K."/>
            <person name="Kleine K."/>
            <person name="Mewes H.-W."/>
            <person name="Zollner A."/>
            <person name="Zaccaria P."/>
        </authorList>
    </citation>
    <scope>NUCLEOTIDE SEQUENCE [LARGE SCALE GENOMIC DNA]</scope>
    <source>
        <strain>ATCC 204508 / S288c</strain>
    </source>
</reference>
<reference key="2">
    <citation type="journal article" date="2014" name="G3 (Bethesda)">
        <title>The reference genome sequence of Saccharomyces cerevisiae: Then and now.</title>
        <authorList>
            <person name="Engel S.R."/>
            <person name="Dietrich F.S."/>
            <person name="Fisk D.G."/>
            <person name="Binkley G."/>
            <person name="Balakrishnan R."/>
            <person name="Costanzo M.C."/>
            <person name="Dwight S.S."/>
            <person name="Hitz B.C."/>
            <person name="Karra K."/>
            <person name="Nash R.S."/>
            <person name="Weng S."/>
            <person name="Wong E.D."/>
            <person name="Lloyd P."/>
            <person name="Skrzypek M.S."/>
            <person name="Miyasato S.R."/>
            <person name="Simison M."/>
            <person name="Cherry J.M."/>
        </authorList>
    </citation>
    <scope>GENOME REANNOTATION</scope>
    <source>
        <strain>ATCC 204508 / S288c</strain>
    </source>
</reference>
<feature type="chain" id="PRO_0000299844" description="Putative uncharacterized protein YDL016C">
    <location>
        <begin position="1"/>
        <end position="100"/>
    </location>
</feature>
<gene>
    <name type="ordered locus">YDL016C</name>
</gene>
<evidence type="ECO:0000305" key="1"/>
<evidence type="ECO:0000305" key="2">
    <source>
    </source>
</evidence>
<protein>
    <recommendedName>
        <fullName>Putative uncharacterized protein YDL016C</fullName>
    </recommendedName>
</protein>
<proteinExistence type="uncertain"/>
<dbReference type="EMBL" id="Z48432">
    <property type="protein sequence ID" value="CAA88343.1"/>
    <property type="molecule type" value="Genomic_DNA"/>
</dbReference>
<dbReference type="EMBL" id="Z74065">
    <property type="protein sequence ID" value="CAA98575.1"/>
    <property type="molecule type" value="Genomic_DNA"/>
</dbReference>
<dbReference type="PIR" id="S52503">
    <property type="entry name" value="S52503"/>
</dbReference>
<dbReference type="DIP" id="DIP-2962N"/>
<dbReference type="IntAct" id="Q12115">
    <property type="interactions" value="1"/>
</dbReference>
<dbReference type="MINT" id="Q12115"/>
<dbReference type="PaxDb" id="4932-YDL016C"/>
<dbReference type="EnsemblFungi" id="YDL016C_mRNA">
    <property type="protein sequence ID" value="YDL016C"/>
    <property type="gene ID" value="YDL016C"/>
</dbReference>
<dbReference type="AGR" id="SGD:S000002174"/>
<dbReference type="SGD" id="S000002174">
    <property type="gene designation" value="YDL016C"/>
</dbReference>
<dbReference type="HOGENOM" id="CLU_2308246_0_0_1"/>
<sequence>MPPIMLNRFTLRNFYLNLSLCKYVSTFKILFPKKRKLFQTSSNLSLCYSDIRRTSLSSKSASLELTTSSSSVLSPSSKYVFSFNSLKNGVFSKSSAELRF</sequence>
<organism>
    <name type="scientific">Saccharomyces cerevisiae (strain ATCC 204508 / S288c)</name>
    <name type="common">Baker's yeast</name>
    <dbReference type="NCBI Taxonomy" id="559292"/>
    <lineage>
        <taxon>Eukaryota</taxon>
        <taxon>Fungi</taxon>
        <taxon>Dikarya</taxon>
        <taxon>Ascomycota</taxon>
        <taxon>Saccharomycotina</taxon>
        <taxon>Saccharomycetes</taxon>
        <taxon>Saccharomycetales</taxon>
        <taxon>Saccharomycetaceae</taxon>
        <taxon>Saccharomyces</taxon>
    </lineage>
</organism>
<name>YD016_YEAST</name>